<organism>
    <name type="scientific">Escherichia coli (strain K12)</name>
    <dbReference type="NCBI Taxonomy" id="83333"/>
    <lineage>
        <taxon>Bacteria</taxon>
        <taxon>Pseudomonadati</taxon>
        <taxon>Pseudomonadota</taxon>
        <taxon>Gammaproteobacteria</taxon>
        <taxon>Enterobacterales</taxon>
        <taxon>Enterobacteriaceae</taxon>
        <taxon>Escherichia</taxon>
    </lineage>
</organism>
<dbReference type="EMBL" id="U00096">
    <property type="protein sequence ID" value="AAC74404.1"/>
    <property type="molecule type" value="Genomic_DNA"/>
</dbReference>
<dbReference type="EMBL" id="AP009048">
    <property type="protein sequence ID" value="BAA14903.1"/>
    <property type="molecule type" value="Genomic_DNA"/>
</dbReference>
<dbReference type="EMBL" id="M12114">
    <property type="status" value="NOT_ANNOTATED_CDS"/>
    <property type="molecule type" value="Genomic_DNA"/>
</dbReference>
<dbReference type="PIR" id="E64881">
    <property type="entry name" value="E64881"/>
</dbReference>
<dbReference type="RefSeq" id="NP_415838.1">
    <property type="nucleotide sequence ID" value="NC_000913.3"/>
</dbReference>
<dbReference type="RefSeq" id="WP_000138728.1">
    <property type="nucleotide sequence ID" value="NZ_SSZK01000012.1"/>
</dbReference>
<dbReference type="SMR" id="P0A8R7"/>
<dbReference type="BioGRID" id="4260149">
    <property type="interactions" value="17"/>
</dbReference>
<dbReference type="DIP" id="DIP-48099N"/>
<dbReference type="FunCoup" id="P0A8R7">
    <property type="interactions" value="97"/>
</dbReference>
<dbReference type="IntAct" id="P0A8R7">
    <property type="interactions" value="9"/>
</dbReference>
<dbReference type="STRING" id="511145.b1322"/>
<dbReference type="jPOST" id="P0A8R7"/>
<dbReference type="PaxDb" id="511145-b1322"/>
<dbReference type="EnsemblBacteria" id="AAC74404">
    <property type="protein sequence ID" value="AAC74404"/>
    <property type="gene ID" value="b1322"/>
</dbReference>
<dbReference type="GeneID" id="945878"/>
<dbReference type="KEGG" id="ecj:JW1315"/>
<dbReference type="KEGG" id="eco:b1322"/>
<dbReference type="KEGG" id="ecoc:C3026_07740"/>
<dbReference type="PATRIC" id="fig|1411691.4.peg.956"/>
<dbReference type="EchoBASE" id="EB2711"/>
<dbReference type="eggNOG" id="COG3768">
    <property type="taxonomic scope" value="Bacteria"/>
</dbReference>
<dbReference type="HOGENOM" id="CLU_057693_2_0_6"/>
<dbReference type="InParanoid" id="P0A8R7"/>
<dbReference type="OMA" id="MFFIAWR"/>
<dbReference type="OrthoDB" id="958025at2"/>
<dbReference type="PhylomeDB" id="P0A8R7"/>
<dbReference type="BioCyc" id="EcoCyc:EG12870-MONOMER"/>
<dbReference type="PRO" id="PR:P0A8R7"/>
<dbReference type="Proteomes" id="UP000000625">
    <property type="component" value="Chromosome"/>
</dbReference>
<dbReference type="GO" id="GO:0005886">
    <property type="term" value="C:plasma membrane"/>
    <property type="evidence" value="ECO:0000314"/>
    <property type="project" value="EcoCyc"/>
</dbReference>
<dbReference type="HAMAP" id="MF_01085">
    <property type="entry name" value="UPF0283"/>
    <property type="match status" value="1"/>
</dbReference>
<dbReference type="InterPro" id="IPR021147">
    <property type="entry name" value="DUF697"/>
</dbReference>
<dbReference type="InterPro" id="IPR006507">
    <property type="entry name" value="UPF0283"/>
</dbReference>
<dbReference type="NCBIfam" id="TIGR01620">
    <property type="entry name" value="hyp_HI0043"/>
    <property type="match status" value="1"/>
</dbReference>
<dbReference type="PANTHER" id="PTHR39342">
    <property type="entry name" value="UPF0283 MEMBRANE PROTEIN YCJF"/>
    <property type="match status" value="1"/>
</dbReference>
<dbReference type="PANTHER" id="PTHR39342:SF1">
    <property type="entry name" value="UPF0283 MEMBRANE PROTEIN YCJF"/>
    <property type="match status" value="1"/>
</dbReference>
<dbReference type="Pfam" id="PF05128">
    <property type="entry name" value="DUF697"/>
    <property type="match status" value="1"/>
</dbReference>
<proteinExistence type="evidence at protein level"/>
<accession>P0A8R7</accession>
<accession>P45525</accession>
<accession>P77177</accession>
<evidence type="ECO:0000255" key="1"/>
<evidence type="ECO:0000305" key="2"/>
<reference key="1">
    <citation type="journal article" date="1996" name="DNA Res.">
        <title>A 570-kb DNA sequence of the Escherichia coli K-12 genome corresponding to the 28.0-40.1 min region on the linkage map.</title>
        <authorList>
            <person name="Aiba H."/>
            <person name="Baba T."/>
            <person name="Fujita K."/>
            <person name="Hayashi K."/>
            <person name="Inada T."/>
            <person name="Isono K."/>
            <person name="Itoh T."/>
            <person name="Kasai H."/>
            <person name="Kashimoto K."/>
            <person name="Kimura S."/>
            <person name="Kitakawa M."/>
            <person name="Kitagawa M."/>
            <person name="Makino K."/>
            <person name="Miki T."/>
            <person name="Mizobuchi K."/>
            <person name="Mori H."/>
            <person name="Mori T."/>
            <person name="Motomura K."/>
            <person name="Nakade S."/>
            <person name="Nakamura Y."/>
            <person name="Nashimoto H."/>
            <person name="Nishio Y."/>
            <person name="Oshima T."/>
            <person name="Saito N."/>
            <person name="Sampei G."/>
            <person name="Seki Y."/>
            <person name="Sivasundaram S."/>
            <person name="Tagami H."/>
            <person name="Takeda J."/>
            <person name="Takemoto K."/>
            <person name="Takeuchi Y."/>
            <person name="Wada C."/>
            <person name="Yamamoto Y."/>
            <person name="Horiuchi T."/>
        </authorList>
    </citation>
    <scope>NUCLEOTIDE SEQUENCE [LARGE SCALE GENOMIC DNA]</scope>
    <source>
        <strain>K12 / W3110 / ATCC 27325 / DSM 5911</strain>
    </source>
</reference>
<reference key="2">
    <citation type="journal article" date="1997" name="Science">
        <title>The complete genome sequence of Escherichia coli K-12.</title>
        <authorList>
            <person name="Blattner F.R."/>
            <person name="Plunkett G. III"/>
            <person name="Bloch C.A."/>
            <person name="Perna N.T."/>
            <person name="Burland V."/>
            <person name="Riley M."/>
            <person name="Collado-Vides J."/>
            <person name="Glasner J.D."/>
            <person name="Rode C.K."/>
            <person name="Mayhew G.F."/>
            <person name="Gregor J."/>
            <person name="Davis N.W."/>
            <person name="Kirkpatrick H.A."/>
            <person name="Goeden M.A."/>
            <person name="Rose D.J."/>
            <person name="Mau B."/>
            <person name="Shao Y."/>
        </authorList>
    </citation>
    <scope>NUCLEOTIDE SEQUENCE [LARGE SCALE GENOMIC DNA]</scope>
    <source>
        <strain>K12 / MG1655 / ATCC 47076</strain>
    </source>
</reference>
<reference key="3">
    <citation type="journal article" date="2006" name="Mol. Syst. Biol.">
        <title>Highly accurate genome sequences of Escherichia coli K-12 strains MG1655 and W3110.</title>
        <authorList>
            <person name="Hayashi K."/>
            <person name="Morooka N."/>
            <person name="Yamamoto Y."/>
            <person name="Fujita K."/>
            <person name="Isono K."/>
            <person name="Choi S."/>
            <person name="Ohtsubo E."/>
            <person name="Baba T."/>
            <person name="Wanner B.L."/>
            <person name="Mori H."/>
            <person name="Horiuchi T."/>
        </authorList>
    </citation>
    <scope>NUCLEOTIDE SEQUENCE [LARGE SCALE GENOMIC DNA]</scope>
    <source>
        <strain>K12 / W3110 / ATCC 27325 / DSM 5911</strain>
    </source>
</reference>
<reference key="4">
    <citation type="journal article" date="1986" name="J. Biol. Chem.">
        <title>Structure of the Escherichia coli K12 regulatory gene tyrR. Nucleotide sequence and sites of initiation of transcription and translation.</title>
        <authorList>
            <person name="Cornish E.C."/>
            <person name="Argyropoulos V.P."/>
            <person name="Pittard J."/>
            <person name="Davidson B.E."/>
        </authorList>
    </citation>
    <scope>NUCLEOTIDE SEQUENCE [GENOMIC DNA] OF 298-353</scope>
    <source>
        <strain>K12</strain>
    </source>
</reference>
<reference key="5">
    <citation type="journal article" date="1995" name="Nucleic Acids Res.">
        <title>Detection of new genes in a bacterial genome using Markov models for three gene classes.</title>
        <authorList>
            <person name="Borodovsky M."/>
            <person name="McIninch J."/>
            <person name="Koonin E.V."/>
            <person name="Rudd K.E."/>
            <person name="Medigue C."/>
            <person name="Danchin A."/>
        </authorList>
    </citation>
    <scope>IDENTIFICATION</scope>
</reference>
<reference key="6">
    <citation type="journal article" date="2005" name="Science">
        <title>Global topology analysis of the Escherichia coli inner membrane proteome.</title>
        <authorList>
            <person name="Daley D.O."/>
            <person name="Rapp M."/>
            <person name="Granseth E."/>
            <person name="Melen K."/>
            <person name="Drew D."/>
            <person name="von Heijne G."/>
        </authorList>
    </citation>
    <scope>TOPOLOGY [LARGE SCALE ANALYSIS]</scope>
    <source>
        <strain>K12 / MG1655 / ATCC 47076</strain>
    </source>
</reference>
<protein>
    <recommendedName>
        <fullName>UPF0283 membrane protein YcjF</fullName>
    </recommendedName>
</protein>
<sequence>MTEPLKPRIDFDGPLEVDQNPKFRAQQTFDENQAQNFAPATLDEAQEEEGQVEAVMDAALRPKRSLWRKMVMGGLALFGASVVGQGVQWTMNAWQTQDWVALGGCAAGALIIGAGVGSVVTEWRRLWRLRQRAHERDEARDLLHSHGTGKGRAFCEKLAQQAGIDQSHPALQRWYASIHETQNDREVVSLYAHLVQPVLDAQARREISRSAAESTLMIAVSPLALVDMAFIAWRNLRLINRIATLYGIELGYYSRLRLFKLVLLNIAFAGASELVREVGMDWMSQDLAARLSTRAAQGIGAGLLTARLGIKAMELCRPLPWIDDDKPRLGDFRRQLIGQVKETLQKGKTPSEK</sequence>
<feature type="chain" id="PRO_0000214172" description="UPF0283 membrane protein YcjF">
    <location>
        <begin position="1"/>
        <end position="353"/>
    </location>
</feature>
<feature type="topological domain" description="Periplasmic" evidence="1">
    <location>
        <begin position="1"/>
        <end position="69"/>
    </location>
</feature>
<feature type="transmembrane region" description="Helical" evidence="1">
    <location>
        <begin position="70"/>
        <end position="90"/>
    </location>
</feature>
<feature type="topological domain" description="Cytoplasmic" evidence="1">
    <location>
        <begin position="91"/>
        <end position="99"/>
    </location>
</feature>
<feature type="transmembrane region" description="Helical" evidence="1">
    <location>
        <begin position="100"/>
        <end position="120"/>
    </location>
</feature>
<feature type="topological domain" description="Periplasmic" evidence="1">
    <location>
        <begin position="121"/>
        <end position="212"/>
    </location>
</feature>
<feature type="transmembrane region" description="Helical" evidence="1">
    <location>
        <begin position="213"/>
        <end position="233"/>
    </location>
</feature>
<feature type="topological domain" description="Cytoplasmic" evidence="1">
    <location>
        <begin position="234"/>
        <end position="353"/>
    </location>
</feature>
<feature type="sequence conflict" description="In Ref. 4." evidence="2" ref="4">
    <original>T</original>
    <variation>S</variation>
    <location>
        <position position="349"/>
    </location>
</feature>
<feature type="sequence conflict" description="In Ref. 4." evidence="2" ref="4">
    <original>SEK</original>
    <variation>AKNNAISGADRISLRRSARFSVFVSMIVDRNLPAIQIVSYHHINCSFFR</variation>
    <location>
        <begin position="351"/>
        <end position="353"/>
    </location>
</feature>
<keyword id="KW-0997">Cell inner membrane</keyword>
<keyword id="KW-1003">Cell membrane</keyword>
<keyword id="KW-0472">Membrane</keyword>
<keyword id="KW-1185">Reference proteome</keyword>
<keyword id="KW-0812">Transmembrane</keyword>
<keyword id="KW-1133">Transmembrane helix</keyword>
<name>YCJF_ECOLI</name>
<gene>
    <name type="primary">ycjF</name>
    <name type="ordered locus">b1322</name>
    <name type="ordered locus">JW1315</name>
</gene>
<comment type="subcellular location">
    <subcellularLocation>
        <location>Cell inner membrane</location>
        <topology>Multi-pass membrane protein</topology>
    </subcellularLocation>
</comment>
<comment type="similarity">
    <text evidence="2">Belongs to the UPF0283 family.</text>
</comment>